<accession>P0CI30</accession>
<accession>D1Z8W6</accession>
<accession>F7VVU3</accession>
<gene>
    <name type="ORF">SMAC_03666.2</name>
</gene>
<comment type="cofactor">
    <cofactor evidence="1">
        <name>Zn(2+)</name>
        <dbReference type="ChEBI" id="CHEBI:29105"/>
    </cofactor>
    <text evidence="1">Binds 2 Zn(2+) ions per subunit.</text>
</comment>
<comment type="subcellular location">
    <subcellularLocation>
        <location evidence="3">Secreted</location>
    </subcellularLocation>
</comment>
<comment type="similarity">
    <text evidence="3">Belongs to the peptidase M20A family.</text>
</comment>
<comment type="sequence caution" evidence="3">
    <conflict type="erroneous gene model prediction">
        <sequence resource="EMBL-CDS" id="CCC09634"/>
    </conflict>
    <text>The predicted gene SMAC_03666 has been split into 2 genes: SMAC_03666.1 and SMAC_03666.2.</text>
</comment>
<comment type="sequence caution" evidence="3">
    <conflict type="frameshift">
        <sequence resource="EMBL-CDS" id="CCC09634"/>
    </conflict>
</comment>
<proteinExistence type="inferred from homology"/>
<name>Y3666_SORMK</name>
<sequence length="452" mass="48342">MKATSNLLLLWGTSLLSPSSAFVIDNHHYQHPLVVDDSSSSSISPLKIFTSSGPSANKEDAPSYRKNLLSLHKSLIEIPSISRTEQEVGKFLLDYLRNNLGYIAKAQFLEGSSSDPFSQYDDDDHSQGRFNVLAWPSSHNLSSPRVLVTSHIDVVPPFIPYHISTSSESDEEITSDAFISGRGSVDAKASVAAQIVAVEELIRAKEVDPADLMLLFVVGEEISGDGMKTFSVVYNDAEKSKKEELPRFKAAIYGEPTENKLSCGHKGHTGGVLKATGIAGHSGYPWLFKSATEILVKALAKIIDADLGSSERYGNTTVNIGTIAGGVAANVIPKEASAKLAIRVAAGNQATGADIVRSAVDKILKEVDEEAFTMEWAGGYGPVECDCDVDGFETMVASYGTDVPNFEGDHVSYLYGPGSILVAHGDDEGLKVGDLETAVEGYKTLIKHALGA</sequence>
<feature type="signal peptide" evidence="2">
    <location>
        <begin position="1"/>
        <end position="28"/>
    </location>
</feature>
<feature type="chain" id="PRO_0000401970" description="Peptidase M20 domain-containing protein SMAC_03666.2">
    <location>
        <begin position="29"/>
        <end position="452"/>
    </location>
</feature>
<feature type="active site" description="Proton acceptor" evidence="1">
    <location>
        <position position="220"/>
    </location>
</feature>
<feature type="binding site" evidence="1">
    <location>
        <position position="186"/>
    </location>
    <ligand>
        <name>Zn(2+)</name>
        <dbReference type="ChEBI" id="CHEBI:29105"/>
        <label>1</label>
    </ligand>
</feature>
<feature type="binding site" evidence="1">
    <location>
        <position position="186"/>
    </location>
    <ligand>
        <name>Zn(2+)</name>
        <dbReference type="ChEBI" id="CHEBI:29105"/>
        <label>2</label>
    </ligand>
</feature>
<feature type="binding site" evidence="1">
    <location>
        <position position="221"/>
    </location>
    <ligand>
        <name>Zn(2+)</name>
        <dbReference type="ChEBI" id="CHEBI:29105"/>
        <label>1</label>
    </ligand>
</feature>
<feature type="glycosylation site" description="N-linked (GlcNAc...) asparagine" evidence="2">
    <location>
        <position position="140"/>
    </location>
</feature>
<feature type="glycosylation site" description="N-linked (GlcNAc...) asparagine" evidence="2">
    <location>
        <position position="315"/>
    </location>
</feature>
<reference key="1">
    <citation type="journal article" date="2010" name="PLoS Genet.">
        <title>De novo assembly of a 40 Mb eukaryotic genome from short sequence reads: Sordaria macrospora, a model organism for fungal morphogenesis.</title>
        <authorList>
            <person name="Nowrousian M."/>
            <person name="Stajich J.E."/>
            <person name="Chu M."/>
            <person name="Engh I."/>
            <person name="Espagne E."/>
            <person name="Halliday K."/>
            <person name="Kamerewerd J."/>
            <person name="Kempken F."/>
            <person name="Knab B."/>
            <person name="Kuo H.-C."/>
            <person name="Osiewacz H.D."/>
            <person name="Poeggeler S."/>
            <person name="Read N.D."/>
            <person name="Seiler S."/>
            <person name="Smith K.M."/>
            <person name="Zickler D."/>
            <person name="Kueck U."/>
            <person name="Freitag M."/>
        </authorList>
    </citation>
    <scope>NUCLEOTIDE SEQUENCE [LARGE SCALE GENOMIC DNA]</scope>
    <source>
        <strain>ATCC MYA-333 / DSM 997 / K(L3346) / K-hell</strain>
    </source>
</reference>
<organism>
    <name type="scientific">Sordaria macrospora (strain ATCC MYA-333 / DSM 997 / K(L3346) / K-hell)</name>
    <dbReference type="NCBI Taxonomy" id="771870"/>
    <lineage>
        <taxon>Eukaryota</taxon>
        <taxon>Fungi</taxon>
        <taxon>Dikarya</taxon>
        <taxon>Ascomycota</taxon>
        <taxon>Pezizomycotina</taxon>
        <taxon>Sordariomycetes</taxon>
        <taxon>Sordariomycetidae</taxon>
        <taxon>Sordariales</taxon>
        <taxon>Sordariaceae</taxon>
        <taxon>Sordaria</taxon>
    </lineage>
</organism>
<protein>
    <recommendedName>
        <fullName>Peptidase M20 domain-containing protein SMAC_03666.2</fullName>
    </recommendedName>
</protein>
<evidence type="ECO:0000250" key="1"/>
<evidence type="ECO:0000255" key="2"/>
<evidence type="ECO:0000305" key="3"/>
<dbReference type="EMBL" id="CABT02000009">
    <property type="protein sequence ID" value="CCC09634.1"/>
    <property type="status" value="ALT_SEQ"/>
    <property type="molecule type" value="Genomic_DNA"/>
</dbReference>
<dbReference type="SMR" id="P0CI30"/>
<dbReference type="STRING" id="771870.P0CI30"/>
<dbReference type="VEuPathDB" id="FungiDB:SMAC_03666"/>
<dbReference type="eggNOG" id="KOG1468">
    <property type="taxonomic scope" value="Eukaryota"/>
</dbReference>
<dbReference type="eggNOG" id="KOG2275">
    <property type="taxonomic scope" value="Eukaryota"/>
</dbReference>
<dbReference type="HOGENOM" id="CLU_339236_0_0_1"/>
<dbReference type="InParanoid" id="P0CI30"/>
<dbReference type="Proteomes" id="UP000001881">
    <property type="component" value="Unassembled WGS sequence"/>
</dbReference>
<dbReference type="GO" id="GO:0005576">
    <property type="term" value="C:extracellular region"/>
    <property type="evidence" value="ECO:0007669"/>
    <property type="project" value="UniProtKB-SubCell"/>
</dbReference>
<dbReference type="GO" id="GO:0046872">
    <property type="term" value="F:metal ion binding"/>
    <property type="evidence" value="ECO:0007669"/>
    <property type="project" value="UniProtKB-KW"/>
</dbReference>
<dbReference type="GO" id="GO:0008233">
    <property type="term" value="F:peptidase activity"/>
    <property type="evidence" value="ECO:0007669"/>
    <property type="project" value="UniProtKB-KW"/>
</dbReference>
<dbReference type="GO" id="GO:0006508">
    <property type="term" value="P:proteolysis"/>
    <property type="evidence" value="ECO:0007669"/>
    <property type="project" value="UniProtKB-KW"/>
</dbReference>
<dbReference type="CDD" id="cd05652">
    <property type="entry name" value="M20_ArgE_DapE-like_fungal"/>
    <property type="match status" value="1"/>
</dbReference>
<dbReference type="Gene3D" id="3.30.70.360">
    <property type="match status" value="1"/>
</dbReference>
<dbReference type="Gene3D" id="3.40.630.10">
    <property type="entry name" value="Zn peptidases"/>
    <property type="match status" value="1"/>
</dbReference>
<dbReference type="InterPro" id="IPR001261">
    <property type="entry name" value="ArgE/DapE_CS"/>
</dbReference>
<dbReference type="InterPro" id="IPR036264">
    <property type="entry name" value="Bact_exopeptidase_dim_dom"/>
</dbReference>
<dbReference type="InterPro" id="IPR002933">
    <property type="entry name" value="Peptidase_M20"/>
</dbReference>
<dbReference type="InterPro" id="IPR011650">
    <property type="entry name" value="Peptidase_M20_dimer"/>
</dbReference>
<dbReference type="InterPro" id="IPR050072">
    <property type="entry name" value="Peptidase_M20A"/>
</dbReference>
<dbReference type="InterPro" id="IPR001160">
    <property type="entry name" value="Peptidase_M20C"/>
</dbReference>
<dbReference type="PANTHER" id="PTHR43808">
    <property type="entry name" value="ACETYLORNITHINE DEACETYLASE"/>
    <property type="match status" value="1"/>
</dbReference>
<dbReference type="PANTHER" id="PTHR43808:SF30">
    <property type="entry name" value="ACETYLORNITHINE DEACETYLASE"/>
    <property type="match status" value="1"/>
</dbReference>
<dbReference type="Pfam" id="PF07687">
    <property type="entry name" value="M20_dimer"/>
    <property type="match status" value="1"/>
</dbReference>
<dbReference type="Pfam" id="PF01546">
    <property type="entry name" value="Peptidase_M20"/>
    <property type="match status" value="1"/>
</dbReference>
<dbReference type="PRINTS" id="PR00934">
    <property type="entry name" value="XHISDIPTASE"/>
</dbReference>
<dbReference type="SUPFAM" id="SSF55031">
    <property type="entry name" value="Bacterial exopeptidase dimerisation domain"/>
    <property type="match status" value="1"/>
</dbReference>
<dbReference type="SUPFAM" id="SSF53187">
    <property type="entry name" value="Zn-dependent exopeptidases"/>
    <property type="match status" value="1"/>
</dbReference>
<dbReference type="PROSITE" id="PS00758">
    <property type="entry name" value="ARGE_DAPE_CPG2_1"/>
    <property type="match status" value="1"/>
</dbReference>
<dbReference type="PROSITE" id="PS00759">
    <property type="entry name" value="ARGE_DAPE_CPG2_2"/>
    <property type="match status" value="1"/>
</dbReference>
<keyword id="KW-0325">Glycoprotein</keyword>
<keyword id="KW-0378">Hydrolase</keyword>
<keyword id="KW-0479">Metal-binding</keyword>
<keyword id="KW-0645">Protease</keyword>
<keyword id="KW-1185">Reference proteome</keyword>
<keyword id="KW-0964">Secreted</keyword>
<keyword id="KW-0732">Signal</keyword>
<keyword id="KW-0862">Zinc</keyword>